<organism>
    <name type="scientific">Aspergillus restrictus</name>
    <dbReference type="NCBI Taxonomy" id="5064"/>
    <lineage>
        <taxon>Eukaryota</taxon>
        <taxon>Fungi</taxon>
        <taxon>Dikarya</taxon>
        <taxon>Ascomycota</taxon>
        <taxon>Pezizomycotina</taxon>
        <taxon>Eurotiomycetes</taxon>
        <taxon>Eurotiomycetidae</taxon>
        <taxon>Eurotiales</taxon>
        <taxon>Aspergillaceae</taxon>
        <taxon>Aspergillus</taxon>
        <taxon>Aspergillus subgen. Aspergillus</taxon>
    </lineage>
</organism>
<accession>P67876</accession>
<accession>P04389</accession>
<accession>P19792</accession>
<reference key="1">
    <citation type="journal article" date="1991" name="Nucleic Acids Res.">
        <title>Isolation and nucleotide sequence of the Aspergillus restrictus gene coding for the ribonucleolytic toxin restrictocin and its expression in Aspergillus nidulans: the leader sequence protects producing strains from suicide.</title>
        <authorList>
            <person name="Lamy B."/>
            <person name="Davies J."/>
        </authorList>
    </citation>
    <scope>NUCLEOTIDE SEQUENCE [GENOMIC DNA]</scope>
    <source>
        <strain>ATCC 34475 / NRRL 2869</strain>
    </source>
</reference>
<reference key="2">
    <citation type="journal article" date="1991" name="Mol. Microbiol.">
        <title>Secretion of a potential virulence factor, a fungal ribonucleotoxin, during human aspergillosis infections.</title>
        <authorList>
            <person name="Lamy B."/>
            <person name="Moutaouakil M."/>
            <person name="Latge J.P."/>
            <person name="Davies J."/>
        </authorList>
    </citation>
    <scope>NUCLEOTIDE SEQUENCE [GENOMIC DNA]</scope>
    <source>
        <strain>ATCC 34475 / NRRL 2869</strain>
    </source>
</reference>
<reference key="3">
    <citation type="submission" date="1994-05" db="EMBL/GenBank/DDBJ databases">
        <title>Regulation and sequence of the restrictocin gene of Aspergillus restrictus.</title>
        <authorList>
            <person name="Yang R."/>
            <person name="Kenealy W.R."/>
        </authorList>
    </citation>
    <scope>NUCLEOTIDE SEQUENCE [GENOMIC DNA / MRNA]</scope>
    <source>
        <strain>ATCC 34475 / NRRL 2869</strain>
    </source>
</reference>
<reference key="4">
    <citation type="journal article" date="1985" name="Biochemistry">
        <title>Complete amino acid sequence of the Aspergillus cytotoxin mitogillin.</title>
        <authorList>
            <person name="Fernandez-Luna J.L."/>
            <person name="Lopez-Otin C."/>
            <person name="Soriano F."/>
            <person name="Mendez E."/>
        </authorList>
    </citation>
    <scope>PROTEIN SEQUENCE OF 28-176</scope>
</reference>
<reference key="5">
    <citation type="journal article" date="1996" name="Structure">
        <title>Insights into specificity of cleavage and mechanism of cell entry from the crystal structure of the highly specific Aspergillus ribotoxin, restrictocin.</title>
        <authorList>
            <person name="Yang X."/>
            <person name="Moffat K."/>
        </authorList>
    </citation>
    <scope>X-RAY CRYSTALLOGRAPHY (1.7 ANGSTROMS) OF 28-176</scope>
</reference>
<reference key="6">
    <citation type="journal article" date="2001" name="Nat. Struct. Biol.">
        <title>Crystal structures of restrictocin-inhibitor complexes with implications for RNA recognition and base flipping.</title>
        <authorList>
            <person name="Yang X."/>
            <person name="Gerczei T."/>
            <person name="Glover L.T."/>
            <person name="Correll C.C."/>
        </authorList>
    </citation>
    <scope>X-RAY CRYSTALLOGRAPHY (2.15 ANGSTROMS) OF 28-176</scope>
</reference>
<feature type="signal peptide" evidence="1">
    <location>
        <begin position="1"/>
        <end position="27"/>
    </location>
</feature>
<feature type="chain" id="PRO_0000030838" description="Ribonuclease mitogillin">
    <location>
        <begin position="28"/>
        <end position="176"/>
    </location>
</feature>
<feature type="active site">
    <location>
        <position position="76"/>
    </location>
</feature>
<feature type="active site" description="Proton acceptor">
    <location>
        <position position="122"/>
    </location>
</feature>
<feature type="active site" description="Proton donor">
    <location>
        <position position="163"/>
    </location>
</feature>
<feature type="disulfide bond">
    <location>
        <begin position="32"/>
        <end position="174"/>
    </location>
</feature>
<feature type="disulfide bond">
    <location>
        <begin position="102"/>
        <end position="158"/>
    </location>
</feature>
<feature type="sequence conflict" description="In Ref. 3; AAA32707." evidence="2" ref="3">
    <original>S</original>
    <variation>N</variation>
    <location>
        <position position="52"/>
    </location>
</feature>
<feature type="sequence conflict" description="In Ref. 4; AA sequence." evidence="2" ref="4">
    <original>D</original>
    <variation>N</variation>
    <location>
        <position position="142"/>
    </location>
</feature>
<feature type="strand" evidence="3">
    <location>
        <begin position="29"/>
        <end position="35"/>
    </location>
</feature>
<feature type="turn" evidence="4">
    <location>
        <begin position="39"/>
        <end position="42"/>
    </location>
</feature>
<feature type="strand" evidence="3">
    <location>
        <begin position="46"/>
        <end position="52"/>
    </location>
</feature>
<feature type="helix" evidence="3">
    <location>
        <begin position="53"/>
        <end position="62"/>
    </location>
</feature>
<feature type="strand" evidence="4">
    <location>
        <begin position="65"/>
        <end position="68"/>
    </location>
</feature>
<feature type="strand" evidence="4">
    <location>
        <begin position="70"/>
        <end position="72"/>
    </location>
</feature>
<feature type="strand" evidence="3">
    <location>
        <begin position="75"/>
        <end position="78"/>
    </location>
</feature>
<feature type="strand" evidence="5">
    <location>
        <begin position="84"/>
        <end position="86"/>
    </location>
</feature>
<feature type="helix" evidence="3">
    <location>
        <begin position="100"/>
        <end position="103"/>
    </location>
</feature>
<feature type="strand" evidence="3">
    <location>
        <begin position="118"/>
        <end position="124"/>
    </location>
</feature>
<feature type="turn" evidence="5">
    <location>
        <begin position="137"/>
        <end position="140"/>
    </location>
</feature>
<feature type="strand" evidence="3">
    <location>
        <begin position="145"/>
        <end position="152"/>
    </location>
</feature>
<feature type="strand" evidence="3">
    <location>
        <begin position="157"/>
        <end position="165"/>
    </location>
</feature>
<feature type="strand" evidence="3">
    <location>
        <begin position="171"/>
        <end position="173"/>
    </location>
</feature>
<gene>
    <name type="primary">ret</name>
</gene>
<keyword id="KW-0002">3D-structure</keyword>
<keyword id="KW-0903">Direct protein sequencing</keyword>
<keyword id="KW-1015">Disulfide bond</keyword>
<keyword id="KW-0378">Hydrolase</keyword>
<keyword id="KW-0540">Nuclease</keyword>
<keyword id="KW-0652">Protein synthesis inhibitor</keyword>
<keyword id="KW-0964">Secreted</keyword>
<keyword id="KW-0732">Signal</keyword>
<evidence type="ECO:0000269" key="1">
    <source>
    </source>
</evidence>
<evidence type="ECO:0000305" key="2"/>
<evidence type="ECO:0007829" key="3">
    <source>
        <dbReference type="PDB" id="1AQZ"/>
    </source>
</evidence>
<evidence type="ECO:0007829" key="4">
    <source>
        <dbReference type="PDB" id="1JBS"/>
    </source>
</evidence>
<evidence type="ECO:0007829" key="5">
    <source>
        <dbReference type="PDB" id="1JBT"/>
    </source>
</evidence>
<proteinExistence type="evidence at protein level"/>
<protein>
    <recommendedName>
        <fullName>Ribonuclease mitogillin</fullName>
        <ecNumber>3.1.27.-</ecNumber>
    </recommendedName>
    <alternativeName>
        <fullName>Restrictocin</fullName>
    </alternativeName>
</protein>
<name>RNMG_ASPRE</name>
<comment type="function">
    <text>This purine-specific ribonuclease cleaves 28S RNA in eukaryotic ribosomes, inhibits protein synthesis, and shows antitumor activity.</text>
</comment>
<comment type="subcellular location">
    <subcellularLocation>
        <location>Secreted</location>
    </subcellularLocation>
</comment>
<comment type="similarity">
    <text evidence="2">Belongs to the ribonuclease U2 family.</text>
</comment>
<dbReference type="EC" id="3.1.27.-"/>
<dbReference type="EMBL" id="X56176">
    <property type="protein sequence ID" value="CAA39637.1"/>
    <property type="molecule type" value="Genomic_DNA"/>
</dbReference>
<dbReference type="EMBL" id="M55508">
    <property type="protein sequence ID" value="AAA32706.1"/>
    <property type="molecule type" value="mRNA"/>
</dbReference>
<dbReference type="EMBL" id="M65257">
    <property type="protein sequence ID" value="AAA32707.1"/>
    <property type="molecule type" value="Genomic_DNA"/>
</dbReference>
<dbReference type="PIR" id="S22294">
    <property type="entry name" value="NRASMR"/>
</dbReference>
<dbReference type="PDB" id="1AQZ">
    <property type="method" value="X-ray"/>
    <property type="resolution" value="1.70 A"/>
    <property type="chains" value="A/B=28-176"/>
</dbReference>
<dbReference type="PDB" id="1JBR">
    <property type="method" value="X-ray"/>
    <property type="resolution" value="2.15 A"/>
    <property type="chains" value="A/B=28-176"/>
</dbReference>
<dbReference type="PDB" id="1JBS">
    <property type="method" value="X-ray"/>
    <property type="resolution" value="1.97 A"/>
    <property type="chains" value="A/B=28-176"/>
</dbReference>
<dbReference type="PDB" id="1JBT">
    <property type="method" value="X-ray"/>
    <property type="resolution" value="2.70 A"/>
    <property type="chains" value="A/B=28-176"/>
</dbReference>
<dbReference type="PDBsum" id="1AQZ"/>
<dbReference type="PDBsum" id="1JBR"/>
<dbReference type="PDBsum" id="1JBS"/>
<dbReference type="PDBsum" id="1JBT"/>
<dbReference type="SMR" id="P67876"/>
<dbReference type="Allergome" id="3050">
    <property type="allergen name" value="Asp r 1"/>
</dbReference>
<dbReference type="BRENDA" id="4.6.1.23">
    <property type="organism ID" value="8124"/>
</dbReference>
<dbReference type="EvolutionaryTrace" id="P67876"/>
<dbReference type="GO" id="GO:0005576">
    <property type="term" value="C:extracellular region"/>
    <property type="evidence" value="ECO:0007669"/>
    <property type="project" value="UniProtKB-SubCell"/>
</dbReference>
<dbReference type="GO" id="GO:0003723">
    <property type="term" value="F:RNA binding"/>
    <property type="evidence" value="ECO:0007669"/>
    <property type="project" value="InterPro"/>
</dbReference>
<dbReference type="GO" id="GO:0004521">
    <property type="term" value="F:RNA endonuclease activity"/>
    <property type="evidence" value="ECO:0007669"/>
    <property type="project" value="InterPro"/>
</dbReference>
<dbReference type="GO" id="GO:0017148">
    <property type="term" value="P:negative regulation of translation"/>
    <property type="evidence" value="ECO:0007669"/>
    <property type="project" value="UniProtKB-KW"/>
</dbReference>
<dbReference type="CDD" id="cd00606">
    <property type="entry name" value="fungal_RNase"/>
    <property type="match status" value="1"/>
</dbReference>
<dbReference type="FunFam" id="3.10.450.30:FF:000001">
    <property type="entry name" value="Ribonuclease mitogillin"/>
    <property type="match status" value="1"/>
</dbReference>
<dbReference type="Gene3D" id="3.10.450.30">
    <property type="entry name" value="Microbial ribonucleases"/>
    <property type="match status" value="1"/>
</dbReference>
<dbReference type="InterPro" id="IPR004025">
    <property type="entry name" value="Fun_ribotoxin"/>
</dbReference>
<dbReference type="InterPro" id="IPR000026">
    <property type="entry name" value="N1-like"/>
</dbReference>
<dbReference type="InterPro" id="IPR016191">
    <property type="entry name" value="Ribonuclease/ribotoxin"/>
</dbReference>
<dbReference type="InterPro" id="IPR048269">
    <property type="entry name" value="RNase_U2"/>
</dbReference>
<dbReference type="Pfam" id="PF00545">
    <property type="entry name" value="Ribonuclease"/>
    <property type="match status" value="1"/>
</dbReference>
<dbReference type="PIRSF" id="PIRSF037430">
    <property type="entry name" value="RNase_U2"/>
    <property type="match status" value="1"/>
</dbReference>
<dbReference type="PRINTS" id="PR01704">
    <property type="entry name" value="FUNRIBOTOXIN"/>
</dbReference>
<dbReference type="SUPFAM" id="SSF53933">
    <property type="entry name" value="Microbial ribonucleases"/>
    <property type="match status" value="1"/>
</dbReference>
<sequence>MVAIKNLFLLAATAVSVLAAPSPLDARATWTCINQQLNPKTNKWEDKRLLYSQAKAESNSHHAPLSDGKTGSSYPHWFTNGYDGNGKLIKGRTPIKFGKADCDRPPKHSQNGMGKDDHYLLEFPTFPDGHDYKFDSKKPKEDPGPARVIYTYPNKVFCGIVAHQRGNQGDLRLCSH</sequence>